<keyword id="KW-0010">Activator</keyword>
<keyword id="KW-0175">Coiled coil</keyword>
<keyword id="KW-0238">DNA-binding</keyword>
<keyword id="KW-0539">Nucleus</keyword>
<keyword id="KW-0611">Plant defense</keyword>
<keyword id="KW-1185">Reference proteome</keyword>
<keyword id="KW-0804">Transcription</keyword>
<keyword id="KW-0805">Transcription regulation</keyword>
<dbReference type="EMBL" id="GU017421">
    <property type="protein sequence ID" value="ADK23849.1"/>
    <property type="molecule type" value="mRNA"/>
</dbReference>
<dbReference type="EMBL" id="CM001066">
    <property type="status" value="NOT_ANNOTATED_CDS"/>
    <property type="molecule type" value="Genomic_DNA"/>
</dbReference>
<dbReference type="RefSeq" id="NP_001234802.2">
    <property type="nucleotide sequence ID" value="NM_001247873.2"/>
</dbReference>
<dbReference type="SMR" id="A0A3Q7GFB5"/>
<dbReference type="STRING" id="4081.A0A3Q7GFB5"/>
<dbReference type="PaxDb" id="4081-Solyc03g113120.2.1"/>
<dbReference type="EnsemblPlants" id="Solyc03g113120.3.1">
    <property type="protein sequence ID" value="Solyc03g113120.3.1"/>
    <property type="gene ID" value="Solyc03g113120.3"/>
</dbReference>
<dbReference type="GeneID" id="100529138"/>
<dbReference type="Gramene" id="Solyc03g113120.3.1">
    <property type="protein sequence ID" value="Solyc03g113120.3.1"/>
    <property type="gene ID" value="Solyc03g113120.3"/>
</dbReference>
<dbReference type="KEGG" id="sly:100529138"/>
<dbReference type="InParanoid" id="A0A3Q7GFB5"/>
<dbReference type="OMA" id="SKGHHQD"/>
<dbReference type="OrthoDB" id="1912868at2759"/>
<dbReference type="Proteomes" id="UP000004994">
    <property type="component" value="Chromosome 3"/>
</dbReference>
<dbReference type="GO" id="GO:0005634">
    <property type="term" value="C:nucleus"/>
    <property type="evidence" value="ECO:0007669"/>
    <property type="project" value="UniProtKB-SubCell"/>
</dbReference>
<dbReference type="GO" id="GO:0003700">
    <property type="term" value="F:DNA-binding transcription factor activity"/>
    <property type="evidence" value="ECO:0007669"/>
    <property type="project" value="InterPro"/>
</dbReference>
<dbReference type="GO" id="GO:0043565">
    <property type="term" value="F:sequence-specific DNA binding"/>
    <property type="evidence" value="ECO:0007669"/>
    <property type="project" value="InterPro"/>
</dbReference>
<dbReference type="GO" id="GO:0006952">
    <property type="term" value="P:defense response"/>
    <property type="evidence" value="ECO:0007669"/>
    <property type="project" value="UniProtKB-KW"/>
</dbReference>
<dbReference type="FunFam" id="2.20.25.80:FF:000002">
    <property type="entry name" value="probable WRKY transcription factor 31"/>
    <property type="match status" value="1"/>
</dbReference>
<dbReference type="Gene3D" id="2.20.25.80">
    <property type="entry name" value="WRKY domain"/>
    <property type="match status" value="1"/>
</dbReference>
<dbReference type="InterPro" id="IPR003657">
    <property type="entry name" value="WRKY_dom"/>
</dbReference>
<dbReference type="InterPro" id="IPR036576">
    <property type="entry name" value="WRKY_dom_sf"/>
</dbReference>
<dbReference type="InterPro" id="IPR044810">
    <property type="entry name" value="WRKY_plant"/>
</dbReference>
<dbReference type="PANTHER" id="PTHR31429">
    <property type="entry name" value="WRKY TRANSCRIPTION FACTOR 36-RELATED"/>
    <property type="match status" value="1"/>
</dbReference>
<dbReference type="PANTHER" id="PTHR31429:SF122">
    <property type="entry name" value="WRKY TRANSCRIPTION FACTOR 72A"/>
    <property type="match status" value="1"/>
</dbReference>
<dbReference type="Pfam" id="PF03106">
    <property type="entry name" value="WRKY"/>
    <property type="match status" value="1"/>
</dbReference>
<dbReference type="SMART" id="SM00774">
    <property type="entry name" value="WRKY"/>
    <property type="match status" value="1"/>
</dbReference>
<dbReference type="SUPFAM" id="SSF118290">
    <property type="entry name" value="WRKY DNA-binding domain"/>
    <property type="match status" value="1"/>
</dbReference>
<dbReference type="PROSITE" id="PS50811">
    <property type="entry name" value="WRKY"/>
    <property type="match status" value="1"/>
</dbReference>
<protein>
    <recommendedName>
        <fullName evidence="8">WRKY transcription factor 72A</fullName>
        <shortName evidence="6">SlWRKY72a</shortName>
    </recommendedName>
    <alternativeName>
        <fullName evidence="7">SlWRKY73</fullName>
    </alternativeName>
    <alternativeName>
        <fullName evidence="8">WRKY DNA-binding protein 72A</fullName>
    </alternativeName>
</protein>
<organism>
    <name type="scientific">Solanum lycopersicum</name>
    <name type="common">Tomato</name>
    <name type="synonym">Lycopersicon esculentum</name>
    <dbReference type="NCBI Taxonomy" id="4081"/>
    <lineage>
        <taxon>Eukaryota</taxon>
        <taxon>Viridiplantae</taxon>
        <taxon>Streptophyta</taxon>
        <taxon>Embryophyta</taxon>
        <taxon>Tracheophyta</taxon>
        <taxon>Spermatophyta</taxon>
        <taxon>Magnoliopsida</taxon>
        <taxon>eudicotyledons</taxon>
        <taxon>Gunneridae</taxon>
        <taxon>Pentapetalae</taxon>
        <taxon>asterids</taxon>
        <taxon>lamiids</taxon>
        <taxon>Solanales</taxon>
        <taxon>Solanaceae</taxon>
        <taxon>Solanoideae</taxon>
        <taxon>Solaneae</taxon>
        <taxon>Solanum</taxon>
        <taxon>Solanum subgen. Lycopersicon</taxon>
    </lineage>
</organism>
<evidence type="ECO:0000255" key="1"/>
<evidence type="ECO:0000255" key="2">
    <source>
        <dbReference type="PROSITE-ProRule" id="PRU00223"/>
    </source>
</evidence>
<evidence type="ECO:0000256" key="3">
    <source>
        <dbReference type="SAM" id="MobiDB-lite"/>
    </source>
</evidence>
<evidence type="ECO:0000269" key="4">
    <source>
    </source>
</evidence>
<evidence type="ECO:0000269" key="5">
    <source>
    </source>
</evidence>
<evidence type="ECO:0000303" key="6">
    <source>
    </source>
</evidence>
<evidence type="ECO:0000303" key="7">
    <source>
    </source>
</evidence>
<evidence type="ECO:0000305" key="8"/>
<feature type="chain" id="PRO_0000447556" description="WRKY transcription factor 72A">
    <location>
        <begin position="1"/>
        <end position="526"/>
    </location>
</feature>
<feature type="DNA-binding region" description="WRKY" evidence="2">
    <location>
        <begin position="232"/>
        <end position="298"/>
    </location>
</feature>
<feature type="region of interest" description="Disordered" evidence="3">
    <location>
        <begin position="40"/>
        <end position="76"/>
    </location>
</feature>
<feature type="region of interest" description="Disordered" evidence="3">
    <location>
        <begin position="170"/>
        <end position="200"/>
    </location>
</feature>
<feature type="coiled-coil region" evidence="1">
    <location>
        <begin position="62"/>
        <end position="106"/>
    </location>
</feature>
<feature type="compositionally biased region" description="Basic and acidic residues" evidence="3">
    <location>
        <begin position="40"/>
        <end position="52"/>
    </location>
</feature>
<feature type="compositionally biased region" description="Basic and acidic residues" evidence="3">
    <location>
        <begin position="60"/>
        <end position="76"/>
    </location>
</feature>
<feature type="compositionally biased region" description="Low complexity" evidence="3">
    <location>
        <begin position="170"/>
        <end position="185"/>
    </location>
</feature>
<feature type="sequence conflict" description="In Ref. 1; ADK23849." evidence="8" ref="1">
    <location>
        <begin position="1"/>
        <end position="2"/>
    </location>
</feature>
<feature type="sequence conflict" description="In Ref. 1; ADK23849." evidence="8" ref="1">
    <original>I</original>
    <variation>M</variation>
    <location>
        <position position="208"/>
    </location>
</feature>
<feature type="sequence conflict" description="In Ref. 1; ADK23849." evidence="8" ref="1">
    <original>G</original>
    <variation>D</variation>
    <location>
        <position position="325"/>
    </location>
</feature>
<feature type="sequence conflict" description="In Ref. 1; ADK23849." evidence="8" ref="1">
    <original>Y</original>
    <variation>YNNN</variation>
    <location>
        <position position="401"/>
    </location>
</feature>
<reference key="1">
    <citation type="journal article" date="2010" name="Plant J.">
        <title>WRKY72-type transcription factors contribute to basal immunity in tomato and Arabidopsis as well as gene-for-gene resistance mediated by the tomato R gene Mi-1.</title>
        <authorList>
            <person name="Bhattarai K.K."/>
            <person name="Atamian H.S."/>
            <person name="Kaloshian I."/>
            <person name="Eulgem T."/>
        </authorList>
    </citation>
    <scope>NUCLEOTIDE SEQUENCE [MRNA]</scope>
    <scope>FUNCTION</scope>
    <scope>INDUCTION</scope>
</reference>
<reference key="2">
    <citation type="journal article" date="2012" name="Nature">
        <title>The tomato genome sequence provides insights into fleshy fruit evolution.</title>
        <authorList>
            <consortium name="Tomato Genome Consortium"/>
        </authorList>
    </citation>
    <scope>NUCLEOTIDE SEQUENCE [LARGE SCALE GENOMIC DNA]</scope>
    <source>
        <strain>cv. Heinz 1706</strain>
    </source>
</reference>
<reference key="3">
    <citation type="journal article" date="2014" name="BMC Genomics">
        <title>RNA sequencing on Solanum lycopersicum trichomes identifies transcription factors that activate terpene synthase promoters.</title>
        <authorList>
            <person name="Spyropoulou E.A."/>
            <person name="Haring M.A."/>
            <person name="Schuurink R.C."/>
        </authorList>
    </citation>
    <scope>FUNCTION</scope>
    <scope>TISSUE SPECIFICITY</scope>
</reference>
<gene>
    <name evidence="6" type="primary">WRKY72A</name>
    <name evidence="7" type="synonym">WRKY73</name>
    <name evidence="8" type="ordered locus">Solyc03g113120</name>
</gene>
<proteinExistence type="evidence at transcript level"/>
<name>WK72A_SOLLC</name>
<sequence length="526" mass="58437">MHMETVFRKSTHGGVVKQDIKIKASEEGFVEDINDLKVEKERKSIHNEDDNSKSSQQKDLTGDKKDDQLESAKADMEEVMEENQRLKKHLDKIMKDYRNLQMQFHEVAQRDAEKTNTDVKHDEAELVSLSLGRTSSDTKKELSKLILSKKENDEKEEDNLTLALDCKFQSSTKSSPSNLSPENSLGEVKDDEKGTDQTWPPHKVLKTIRNEEDDVTQQNPTKRAKVSVRVRCDTPTMNDGCQWRKYGQKIAKGNPCPRAYYRCTVAPNCPVRKQVQRCIQDMSILITTYEGTHNHPLPHSATSMAFTTSAAASMLLSGSSSSGSGPTSSTASATTSALNYCFSDNSKPNPFYNLPHSSISSSSHSQYPTITLDLTSNSSTSSFPGQNYRTIANSNNYPPRYNNNNSSTNILNFSSFESNHLLPMSWSNRNNQDTHSQSYLQNNIKSAASTQTLLPQDTIAAATKAITSDPKFQSALAVALTSIIGSRSGNHHIDEKSGQNMKVTEPFPVLCSFPSTSPGDHKDYTL</sequence>
<comment type="function">
    <text evidence="4 5">Transcription activator involved in the transcriptional regulation of terpene biosynthesis in glandular trichomes (PubMed:24884371). Binds to the promoter of the linalool synthase TPS5 and promotes TPS5 gene transactivation (PubMed:24884371). In association with WRKY72B, contributes to basal defense against root-knot nematodes (RKNs) and potato aphids, as well as Mi-1-mediated gene-for-gene resistance to these pests (PubMed:20409007). Both WRKY72A and WRKY72B are not required for gene-for-gene resistance mediated by Pto, another tomato R gene (PubMed:20409007).</text>
</comment>
<comment type="subcellular location">
    <subcellularLocation>
        <location evidence="2">Nucleus</location>
    </subcellularLocation>
</comment>
<comment type="tissue specificity">
    <text evidence="5">Expressed in roots, trichomes and fruits.</text>
</comment>
<comment type="induction">
    <text evidence="4">Induced by infection with the root-knot nematode (RKN) Meloidogyne incognita and potato aphids.</text>
</comment>
<comment type="miscellaneous">
    <text evidence="4">Plants silencing WRKY72A show a reduction of the R gene Mi-1-mediated resistance as well as basal defense against root-knot nematodes (RKNs) and potato aphids.</text>
</comment>
<comment type="similarity">
    <text evidence="8">Belongs to the WRKY group II-b family.</text>
</comment>
<accession>A0A3Q7GFB5</accession>
<accession>D8VNC5</accession>